<keyword id="KW-0963">Cytoplasm</keyword>
<keyword id="KW-0227">DNA damage</keyword>
<keyword id="KW-0234">DNA repair</keyword>
<keyword id="KW-0539">Nucleus</keyword>
<keyword id="KW-0597">Phosphoprotein</keyword>
<keyword id="KW-1185">Reference proteome</keyword>
<keyword id="KW-0804">Transcription</keyword>
<keyword id="KW-0805">Transcription regulation</keyword>
<dbReference type="EMBL" id="BC111195">
    <property type="protein sequence ID" value="AAI11196.1"/>
    <property type="molecule type" value="mRNA"/>
</dbReference>
<dbReference type="RefSeq" id="NP_001035627.1">
    <property type="nucleotide sequence ID" value="NM_001040537.2"/>
</dbReference>
<dbReference type="SMR" id="Q2T9Z5"/>
<dbReference type="FunCoup" id="Q2T9Z5">
    <property type="interactions" value="2395"/>
</dbReference>
<dbReference type="STRING" id="9913.ENSBTAP00000058777"/>
<dbReference type="PaxDb" id="9913-ENSBTAP00000011263"/>
<dbReference type="GeneID" id="518046"/>
<dbReference type="KEGG" id="bta:518046"/>
<dbReference type="CTD" id="404672"/>
<dbReference type="VEuPathDB" id="HostDB:ENSBTAG00000008543"/>
<dbReference type="eggNOG" id="KOG3451">
    <property type="taxonomic scope" value="Eukaryota"/>
</dbReference>
<dbReference type="HOGENOM" id="CLU_166246_4_0_1"/>
<dbReference type="InParanoid" id="Q2T9Z5"/>
<dbReference type="OMA" id="VKCDPAM"/>
<dbReference type="OrthoDB" id="354at2759"/>
<dbReference type="TreeFam" id="TF319487"/>
<dbReference type="Reactome" id="R-BTA-113418">
    <property type="pathway name" value="Formation of the Early Elongation Complex"/>
</dbReference>
<dbReference type="Reactome" id="R-BTA-5696395">
    <property type="pathway name" value="Formation of Incision Complex in GG-NER"/>
</dbReference>
<dbReference type="Reactome" id="R-BTA-5696400">
    <property type="pathway name" value="Dual Incision in GG-NER"/>
</dbReference>
<dbReference type="Reactome" id="R-BTA-674695">
    <property type="pathway name" value="RNA Polymerase II Pre-transcription Events"/>
</dbReference>
<dbReference type="Reactome" id="R-BTA-6781823">
    <property type="pathway name" value="Formation of TC-NER Pre-Incision Complex"/>
</dbReference>
<dbReference type="Reactome" id="R-BTA-6782135">
    <property type="pathway name" value="Dual incision in TC-NER"/>
</dbReference>
<dbReference type="Reactome" id="R-BTA-6782210">
    <property type="pathway name" value="Gap-filling DNA repair synthesis and ligation in TC-NER"/>
</dbReference>
<dbReference type="Reactome" id="R-BTA-6796648">
    <property type="pathway name" value="TP53 Regulates Transcription of DNA Repair Genes"/>
</dbReference>
<dbReference type="Reactome" id="R-BTA-72086">
    <property type="pathway name" value="mRNA Capping"/>
</dbReference>
<dbReference type="Reactome" id="R-BTA-73762">
    <property type="pathway name" value="RNA Polymerase I Transcription Initiation"/>
</dbReference>
<dbReference type="Reactome" id="R-BTA-73772">
    <property type="pathway name" value="RNA Polymerase I Promoter Escape"/>
</dbReference>
<dbReference type="Reactome" id="R-BTA-73776">
    <property type="pathway name" value="RNA Polymerase II Promoter Escape"/>
</dbReference>
<dbReference type="Reactome" id="R-BTA-73779">
    <property type="pathway name" value="RNA Polymerase II Transcription Pre-Initiation And Promoter Opening"/>
</dbReference>
<dbReference type="Reactome" id="R-BTA-73863">
    <property type="pathway name" value="RNA Polymerase I Transcription Termination"/>
</dbReference>
<dbReference type="Reactome" id="R-BTA-75953">
    <property type="pathway name" value="RNA Polymerase II Transcription Initiation"/>
</dbReference>
<dbReference type="Reactome" id="R-BTA-75955">
    <property type="pathway name" value="RNA Polymerase II Transcription Elongation"/>
</dbReference>
<dbReference type="Reactome" id="R-BTA-76042">
    <property type="pathway name" value="RNA Polymerase II Transcription Initiation And Promoter Clearance"/>
</dbReference>
<dbReference type="Reactome" id="R-BTA-77075">
    <property type="pathway name" value="RNA Pol II CTD phosphorylation and interaction with CE"/>
</dbReference>
<dbReference type="Proteomes" id="UP000009136">
    <property type="component" value="Chromosome 9"/>
</dbReference>
<dbReference type="Bgee" id="ENSBTAG00000008543">
    <property type="expression patterns" value="Expressed in semen and 108 other cell types or tissues"/>
</dbReference>
<dbReference type="GO" id="GO:0005737">
    <property type="term" value="C:cytoplasm"/>
    <property type="evidence" value="ECO:0007669"/>
    <property type="project" value="UniProtKB-SubCell"/>
</dbReference>
<dbReference type="GO" id="GO:0005730">
    <property type="term" value="C:nucleolus"/>
    <property type="evidence" value="ECO:0007669"/>
    <property type="project" value="Ensembl"/>
</dbReference>
<dbReference type="GO" id="GO:0005669">
    <property type="term" value="C:transcription factor TFIID complex"/>
    <property type="evidence" value="ECO:0007669"/>
    <property type="project" value="Ensembl"/>
</dbReference>
<dbReference type="GO" id="GO:0000439">
    <property type="term" value="C:transcription factor TFIIH core complex"/>
    <property type="evidence" value="ECO:0000318"/>
    <property type="project" value="GO_Central"/>
</dbReference>
<dbReference type="GO" id="GO:0005675">
    <property type="term" value="C:transcription factor TFIIH holo complex"/>
    <property type="evidence" value="ECO:0000318"/>
    <property type="project" value="GO_Central"/>
</dbReference>
<dbReference type="GO" id="GO:0071480">
    <property type="term" value="P:cellular response to gamma radiation"/>
    <property type="evidence" value="ECO:0007669"/>
    <property type="project" value="Ensembl"/>
</dbReference>
<dbReference type="GO" id="GO:0000462">
    <property type="term" value="P:maturation of SSU-rRNA from tricistronic rRNA transcript (SSU-rRNA, 5.8S rRNA, LSU-rRNA)"/>
    <property type="evidence" value="ECO:0007669"/>
    <property type="project" value="Ensembl"/>
</dbReference>
<dbReference type="GO" id="GO:0006294">
    <property type="term" value="P:nucleotide-excision repair, preincision complex assembly"/>
    <property type="evidence" value="ECO:0000318"/>
    <property type="project" value="GO_Central"/>
</dbReference>
<dbReference type="GO" id="GO:0006366">
    <property type="term" value="P:transcription by RNA polymerase II"/>
    <property type="evidence" value="ECO:0000318"/>
    <property type="project" value="GO_Central"/>
</dbReference>
<dbReference type="GO" id="GO:0006362">
    <property type="term" value="P:transcription elongation by RNA polymerase I"/>
    <property type="evidence" value="ECO:0007669"/>
    <property type="project" value="Ensembl"/>
</dbReference>
<dbReference type="GO" id="GO:0006367">
    <property type="term" value="P:transcription initiation at RNA polymerase II promoter"/>
    <property type="evidence" value="ECO:0007669"/>
    <property type="project" value="InterPro"/>
</dbReference>
<dbReference type="FunFam" id="3.30.70.1220:FF:000001">
    <property type="entry name" value="General transcription factor IIH subunit 5"/>
    <property type="match status" value="1"/>
</dbReference>
<dbReference type="Gene3D" id="3.30.70.1220">
    <property type="entry name" value="TFB5-like"/>
    <property type="match status" value="1"/>
</dbReference>
<dbReference type="InterPro" id="IPR035935">
    <property type="entry name" value="TFB5-like_sf"/>
</dbReference>
<dbReference type="InterPro" id="IPR009400">
    <property type="entry name" value="TFIIH_TTDA/Tfb5"/>
</dbReference>
<dbReference type="PANTHER" id="PTHR28580">
    <property type="entry name" value="GENERAL TRANSCRIPTION FACTOR IIH SUBUNIT 5"/>
    <property type="match status" value="1"/>
</dbReference>
<dbReference type="PANTHER" id="PTHR28580:SF1">
    <property type="entry name" value="GENERAL TRANSCRIPTION FACTOR IIH SUBUNIT 5"/>
    <property type="match status" value="1"/>
</dbReference>
<dbReference type="Pfam" id="PF06331">
    <property type="entry name" value="Tfb5"/>
    <property type="match status" value="1"/>
</dbReference>
<dbReference type="SMART" id="SM01395">
    <property type="entry name" value="Tbf5"/>
    <property type="match status" value="1"/>
</dbReference>
<dbReference type="SUPFAM" id="SSF142897">
    <property type="entry name" value="TFB5-like"/>
    <property type="match status" value="1"/>
</dbReference>
<feature type="chain" id="PRO_0000328422" description="General transcription factor IIH subunit 5">
    <location>
        <begin position="1"/>
        <end position="71"/>
    </location>
</feature>
<feature type="modified residue" description="Phosphothreonine" evidence="1">
    <location>
        <position position="69"/>
    </location>
</feature>
<sequence>MVNVLKGVLIECDPAMKQFLLYLDESNALGKKFIIQDIDDTHVFVIAELVNVLQERVGELMDQNAFSLTQK</sequence>
<name>TF2H5_BOVIN</name>
<protein>
    <recommendedName>
        <fullName>General transcription factor IIH subunit 5</fullName>
    </recommendedName>
    <alternativeName>
        <fullName>General transcription factor IIH polypeptide 5</fullName>
    </alternativeName>
    <alternativeName>
        <fullName evidence="1">TFB5 ortholog</fullName>
    </alternativeName>
    <alternativeName>
        <fullName evidence="1">TFIIH basal transcription factor complex TTD-A subunit</fullName>
    </alternativeName>
    <alternativeName>
        <fullName evidence="1">TFIIH subunit p8</fullName>
    </alternativeName>
</protein>
<comment type="function">
    <text evidence="1">Component of the general transcription and DNA repair factor IIH (TFIIH) core complex, which is involved in general and transcription-coupled nucleotide excision repair (NER) of damaged DNA and, when complexed to CAK, in RNA transcription by RNA polymerase II. In NER, TFIIH acts by opening DNA around the lesion to allow the excision of the damaged oligonucleotide and its replacement by a new DNA fragment. In transcription, TFIIH has an essential role in transcription initiation. When the pre-initiation complex (PIC) has been established, TFIIH is required for promoter opening and promoter escape. Phosphorylation of the C-terminal tail (CTD) of the largest subunit of RNA polymerase II by the kinase module CAK controls the initiation of transcription. Necessary for the stability of the TFIIH complex and for the presence of normal levels of TFIIH in the cell.</text>
</comment>
<comment type="subunit">
    <text evidence="1">Component of the 7-subunit TFIIH core complex composed of XPB/ERCC3, XPD/ERCC2, GTF2H1, GTF2H2, GTF2H3, GTF2H4 and GTF2H5, which is active in NER. The core complex associates with the 3-subunit CDK-activating kinase (CAK) module composed of CCNH/cyclin H, CDK7 and MNAT1 to form the 10-subunit holoenzyme (holo-TFIIH) active in transcription. Part of TBP-based Pol II pre-initiation complex (PIC), in which Pol II core assembles with general transcription factors and other specific initiation factors including GTF2E1, GTF2E2, GTF2F1, GTF2F2, TCEA1, ERCC2, ERCC3, GTF2H2, GTF2H3, GTF2H4, GTF2H5, GTF2A1, GTF2A2, GTF2B and TBP; this large multi-subunit PIC complex mediates DNA unwinding and targets Pol II core to the transcription start site where the first phosphodiester bond forms.</text>
</comment>
<comment type="subcellular location">
    <subcellularLocation>
        <location evidence="2">Nucleus</location>
    </subcellularLocation>
    <subcellularLocation>
        <location evidence="2">Cytoplasm</location>
    </subcellularLocation>
</comment>
<comment type="similarity">
    <text evidence="3">Belongs to the TFB5 family.</text>
</comment>
<proteinExistence type="inferred from homology"/>
<gene>
    <name type="primary">GTF2H5</name>
</gene>
<evidence type="ECO:0000250" key="1">
    <source>
        <dbReference type="UniProtKB" id="Q6ZYL4"/>
    </source>
</evidence>
<evidence type="ECO:0000250" key="2">
    <source>
        <dbReference type="UniProtKB" id="Q8K2X8"/>
    </source>
</evidence>
<evidence type="ECO:0000305" key="3"/>
<reference key="1">
    <citation type="submission" date="2005-12" db="EMBL/GenBank/DDBJ databases">
        <authorList>
            <consortium name="NIH - Mammalian Gene Collection (MGC) project"/>
        </authorList>
    </citation>
    <scope>NUCLEOTIDE SEQUENCE [LARGE SCALE MRNA]</scope>
    <source>
        <strain>Crossbred X Angus</strain>
        <tissue>Liver</tissue>
    </source>
</reference>
<accession>Q2T9Z5</accession>
<organism>
    <name type="scientific">Bos taurus</name>
    <name type="common">Bovine</name>
    <dbReference type="NCBI Taxonomy" id="9913"/>
    <lineage>
        <taxon>Eukaryota</taxon>
        <taxon>Metazoa</taxon>
        <taxon>Chordata</taxon>
        <taxon>Craniata</taxon>
        <taxon>Vertebrata</taxon>
        <taxon>Euteleostomi</taxon>
        <taxon>Mammalia</taxon>
        <taxon>Eutheria</taxon>
        <taxon>Laurasiatheria</taxon>
        <taxon>Artiodactyla</taxon>
        <taxon>Ruminantia</taxon>
        <taxon>Pecora</taxon>
        <taxon>Bovidae</taxon>
        <taxon>Bovinae</taxon>
        <taxon>Bos</taxon>
    </lineage>
</organism>